<comment type="function">
    <text evidence="12">(Microbial infection) Gangliosides GD1b and GT1b (derived from GM3) may serve as receptors for some C.botulinum neurotoxins (minimally types BoNT/A, B, C) (PubMed:16115873).</text>
</comment>
<comment type="function">
    <text evidence="2 4 5 7">Transfers the sialyl group (N-acetyl-alpha-neuraminyl or NeuAc) from CMP-NeuAc to the non-reducing terminal galactose (Gal) of glycosphingolipids forming gangliosides (important molecules involved in the regulation of multiple cellular processes, including cell proliferation and differentiation, apoptosis, embryogenesis, development, and oncogenesis) (PubMed:10092602, PubMed:12629211, PubMed:9875239). Mainly involved in the biosynthesis of ganglioside GM3 but can also use different glycolipids as substrate acceptors such as D-galactosylceramide (GalCer), asialo-GM2 (GA2) and asialo-GM1 (GA1), although less preferentially than beta-D-Gal-(1-&gt;4)-beta-D-Glc-(1&lt;-&gt;1)-Cer (LacCer) (By similarity).</text>
</comment>
<comment type="catalytic activity">
    <reaction evidence="4 5 7">
        <text>a beta-D-Gal-(1-&gt;4)-beta-D-Glc-(1&lt;-&gt;1)-Cer(d18:1(4E)) + CMP-N-acetyl-beta-neuraminate = a ganglioside GM3 (d18:1(4E)) + CMP + H(+)</text>
        <dbReference type="Rhea" id="RHEA:18417"/>
        <dbReference type="ChEBI" id="CHEBI:15378"/>
        <dbReference type="ChEBI" id="CHEBI:17950"/>
        <dbReference type="ChEBI" id="CHEBI:57812"/>
        <dbReference type="ChEBI" id="CHEBI:60065"/>
        <dbReference type="ChEBI" id="CHEBI:60377"/>
        <dbReference type="EC" id="2.4.3.9"/>
    </reaction>
    <physiologicalReaction direction="left-to-right" evidence="10 11 13">
        <dbReference type="Rhea" id="RHEA:18418"/>
    </physiologicalReaction>
</comment>
<comment type="catalytic activity">
    <reaction evidence="2">
        <text>ganglioside GA2 (d18:1(4E)/18:0) + CMP-N-acetyl-beta-neuraminate = ganglioside GM2 (d18:1(4E)/18:0) + CMP + H(+)</text>
        <dbReference type="Rhea" id="RHEA:41776"/>
        <dbReference type="ChEBI" id="CHEBI:15378"/>
        <dbReference type="ChEBI" id="CHEBI:57812"/>
        <dbReference type="ChEBI" id="CHEBI:60377"/>
        <dbReference type="ChEBI" id="CHEBI:78485"/>
        <dbReference type="ChEBI" id="CHEBI:78486"/>
    </reaction>
    <physiologicalReaction direction="left-to-right" evidence="2">
        <dbReference type="Rhea" id="RHEA:41777"/>
    </physiologicalReaction>
</comment>
<comment type="catalytic activity">
    <reaction evidence="2">
        <text>a beta-D-Gal-(1&lt;-&gt;1')-ceramide + CMP-N-acetyl-beta-neuraminate = N-acetyl-alpha-neuraminosyl-(2-&gt;3)-beta-D-galactosyl-(1&lt;-&gt;1')-ceramide + CMP + H(+)</text>
        <dbReference type="Rhea" id="RHEA:41780"/>
        <dbReference type="ChEBI" id="CHEBI:15378"/>
        <dbReference type="ChEBI" id="CHEBI:57812"/>
        <dbReference type="ChEBI" id="CHEBI:60377"/>
        <dbReference type="ChEBI" id="CHEBI:82643"/>
        <dbReference type="ChEBI" id="CHEBI:143593"/>
    </reaction>
    <physiologicalReaction direction="left-to-right" evidence="2">
        <dbReference type="Rhea" id="RHEA:41781"/>
    </physiologicalReaction>
</comment>
<comment type="catalytic activity">
    <reaction evidence="2">
        <text>ganglioside GA1 (d18:1(4E)/18:0) + CMP-N-acetyl-beta-neuraminate = ganglioside GM1 (d18:1(4E)/18:0) + CMP + H(+)</text>
        <dbReference type="Rhea" id="RHEA:41784"/>
        <dbReference type="ChEBI" id="CHEBI:15378"/>
        <dbReference type="ChEBI" id="CHEBI:57812"/>
        <dbReference type="ChEBI" id="CHEBI:60377"/>
        <dbReference type="ChEBI" id="CHEBI:73110"/>
        <dbReference type="ChEBI" id="CHEBI:78484"/>
    </reaction>
    <physiologicalReaction direction="left-to-right" evidence="2">
        <dbReference type="Rhea" id="RHEA:41785"/>
    </physiologicalReaction>
</comment>
<comment type="subcellular location">
    <subcellularLocation>
        <location evidence="9">Golgi apparatus membrane</location>
        <topology evidence="9">Single-pass type II membrane protein</topology>
    </subcellularLocation>
</comment>
<comment type="alternative products">
    <event type="alternative splicing"/>
    <isoform>
        <id>O88829-1</id>
        <name>1</name>
        <sequence type="displayed"/>
    </isoform>
    <isoform>
        <id>O88829-2</id>
        <name>2</name>
        <sequence type="described" ref="VSP_033689"/>
    </isoform>
</comment>
<comment type="tissue specificity">
    <text evidence="4 7">Mainly expressed in brain, and then testis, heart and liver, almost all tissues showed some levels of the gene expression.</text>
</comment>
<comment type="disruption phenotype">
    <text evidence="5">Mice are viable and fertile, and do not show any obvious abnormality apart from an increased sensitivity to insulin (PubMed:12629211). The major brain gangliosides derived from GM3 (GM1a, GD1a, GD1b, and GT1b) are missing (PubMed:12629211).</text>
</comment>
<comment type="disruption phenotype">
    <text evidence="6">(Microbial infection) Cerebellar granule cells are no longer susceptible to C.botulinum neurotoxin type C (BoNT/C), and syntaxin, the BoNT/C target, is not degraded. Cells remain susceptible to neurotoxins C.botulinum neurotoxin types CD and D (BoNT/CD and BoNT/D, botD) (PubMed:16115873). Knockout mice survive 6 times longer when injected intravenously with BoNT/C; the knockout has no effects on time of survival for BoNT/CD and BoNT/D (PubMed:16115873).</text>
</comment>
<comment type="similarity">
    <text evidence="9">Belongs to the glycosyltransferase 29 family.</text>
</comment>
<comment type="sequence caution" evidence="9">
    <conflict type="erroneous initiation">
        <sequence resource="EMBL-CDS" id="AAF66147"/>
    </conflict>
    <text>Truncated N-terminus.</text>
</comment>
<comment type="sequence caution" evidence="9">
    <conflict type="erroneous initiation">
        <sequence resource="EMBL-CDS" id="BAA33491"/>
    </conflict>
    <text>Truncated N-terminus.</text>
</comment>
<comment type="sequence caution" evidence="9">
    <conflict type="erroneous initiation">
        <sequence resource="EMBL-CDS" id="BAA76467"/>
    </conflict>
    <text>Truncated N-terminus.</text>
</comment>
<comment type="sequence caution" evidence="9">
    <conflict type="erroneous initiation">
        <sequence resource="EMBL-CDS" id="BAB28571"/>
    </conflict>
    <text>Truncated N-terminus.</text>
</comment>
<comment type="sequence caution" evidence="9">
    <conflict type="erroneous initiation">
        <sequence resource="EMBL-CDS" id="BAE34763"/>
    </conflict>
    <text>Truncated N-terminus.</text>
</comment>
<comment type="sequence caution" evidence="9">
    <conflict type="erroneous initiation">
        <sequence resource="EMBL-CDS" id="CAA75235"/>
    </conflict>
    <text>Truncated N-terminus.</text>
</comment>
<comment type="sequence caution" evidence="9">
    <conflict type="erroneous initiation">
        <sequence resource="EMBL-CDS" id="CAA75236"/>
    </conflict>
    <text>Truncated N-terminus.</text>
</comment>
<comment type="sequence caution" evidence="9">
    <conflict type="erroneous gene model prediction">
        <sequence resource="EMBL-CDS" id="CAC79655"/>
    </conflict>
</comment>
<comment type="online information" name="Functional Glycomics Gateway - GTase">
    <link uri="http://www.functionalglycomics.org/glycomics/molecule/jsp/glycoEnzyme/viewGlycoEnzyme.jsp?gbpId=gt_mou_646"/>
    <text>ST3Gal V</text>
</comment>
<protein>
    <recommendedName>
        <fullName>Lactosylceramide alpha-2,3-sialyltransferase</fullName>
        <ecNumber evidence="4 5 7">2.4.3.9</ecNumber>
    </recommendedName>
    <alternativeName>
        <fullName>CMP-NeuAc:lactosylceramide alpha-2,3-sialyltransferase</fullName>
    </alternativeName>
    <alternativeName>
        <fullName>Ganglioside GM3 synthase</fullName>
    </alternativeName>
    <alternativeName>
        <fullName>ST3Gal V</fullName>
        <shortName>ST3GalV</shortName>
    </alternativeName>
    <alternativeName>
        <fullName>Sialyltransferase 9</fullName>
    </alternativeName>
</protein>
<dbReference type="EC" id="2.4.3.9" evidence="4 5 7"/>
<dbReference type="EMBL" id="Y15003">
    <property type="protein sequence ID" value="CAA75235.1"/>
    <property type="status" value="ALT_INIT"/>
    <property type="molecule type" value="mRNA"/>
</dbReference>
<dbReference type="EMBL" id="Y15003">
    <property type="protein sequence ID" value="CAA75236.1"/>
    <property type="status" value="ALT_INIT"/>
    <property type="molecule type" value="mRNA"/>
</dbReference>
<dbReference type="EMBL" id="AB018048">
    <property type="protein sequence ID" value="BAA33491.1"/>
    <property type="status" value="ALT_INIT"/>
    <property type="molecule type" value="mRNA"/>
</dbReference>
<dbReference type="EMBL" id="AF119416">
    <property type="protein sequence ID" value="AAF66147.1"/>
    <property type="status" value="ALT_INIT"/>
    <property type="molecule type" value="mRNA"/>
</dbReference>
<dbReference type="EMBL" id="AK012961">
    <property type="protein sequence ID" value="BAB28571.1"/>
    <property type="status" value="ALT_INIT"/>
    <property type="molecule type" value="mRNA"/>
</dbReference>
<dbReference type="EMBL" id="AK159000">
    <property type="protein sequence ID" value="BAE34763.1"/>
    <property type="status" value="ALT_INIT"/>
    <property type="molecule type" value="mRNA"/>
</dbReference>
<dbReference type="EMBL" id="AK165726">
    <property type="protein sequence ID" value="BAE38355.1"/>
    <property type="molecule type" value="mRNA"/>
</dbReference>
<dbReference type="EMBL" id="BC138557">
    <property type="protein sequence ID" value="AAI38558.1"/>
    <property type="molecule type" value="mRNA"/>
</dbReference>
<dbReference type="EMBL" id="BC138559">
    <property type="protein sequence ID" value="AAI38560.1"/>
    <property type="molecule type" value="mRNA"/>
</dbReference>
<dbReference type="EMBL" id="AB013302">
    <property type="protein sequence ID" value="BAA76467.1"/>
    <property type="status" value="ALT_INIT"/>
    <property type="molecule type" value="mRNA"/>
</dbReference>
<dbReference type="EMBL" id="Y18022">
    <property type="protein sequence ID" value="CAC79654.1"/>
    <property type="molecule type" value="Genomic_DNA"/>
</dbReference>
<dbReference type="EMBL" id="Y18023">
    <property type="protein sequence ID" value="CAC79655.1"/>
    <property type="status" value="ALT_SEQ"/>
    <property type="molecule type" value="Genomic_DNA"/>
</dbReference>
<dbReference type="CCDS" id="CCDS20237.1">
    <molecule id="O88829-1"/>
</dbReference>
<dbReference type="PIR" id="JE0364">
    <property type="entry name" value="JE0364"/>
</dbReference>
<dbReference type="RefSeq" id="NP_001030305.1">
    <molecule id="O88829-1"/>
    <property type="nucleotide sequence ID" value="NM_001035228.3"/>
</dbReference>
<dbReference type="RefSeq" id="NP_035505.2">
    <property type="nucleotide sequence ID" value="NM_011375.3"/>
</dbReference>
<dbReference type="RefSeq" id="XP_006505880.1">
    <property type="nucleotide sequence ID" value="XM_006505817.3"/>
</dbReference>
<dbReference type="SMR" id="O88829"/>
<dbReference type="BioGRID" id="203247">
    <property type="interactions" value="1"/>
</dbReference>
<dbReference type="ELM" id="O88829"/>
<dbReference type="FunCoup" id="O88829">
    <property type="interactions" value="318"/>
</dbReference>
<dbReference type="STRING" id="10090.ENSMUSP00000070414"/>
<dbReference type="SwissLipids" id="SLP:000000752"/>
<dbReference type="SwissLipids" id="SLP:000000759"/>
<dbReference type="CAZy" id="GT29">
    <property type="family name" value="Glycosyltransferase Family 29"/>
</dbReference>
<dbReference type="GlyConnect" id="2454">
    <property type="glycosylation" value="4 N-Linked glycans (1 site)"/>
</dbReference>
<dbReference type="GlyCosmos" id="O88829">
    <property type="glycosylation" value="3 sites, 4 glycans"/>
</dbReference>
<dbReference type="GlyGen" id="O88829">
    <property type="glycosylation" value="4 sites, 5 N-linked glycans (2 sites), 1 O-linked glycan (1 site)"/>
</dbReference>
<dbReference type="iPTMnet" id="O88829"/>
<dbReference type="PhosphoSitePlus" id="O88829"/>
<dbReference type="SwissPalm" id="O88829"/>
<dbReference type="PaxDb" id="10090-ENSMUSP00000070414"/>
<dbReference type="PeptideAtlas" id="O88829"/>
<dbReference type="ProteomicsDB" id="261398">
    <molecule id="O88829-1"/>
</dbReference>
<dbReference type="ProteomicsDB" id="261399">
    <molecule id="O88829-2"/>
</dbReference>
<dbReference type="Pumba" id="O88829"/>
<dbReference type="Antibodypedia" id="31972">
    <property type="antibodies" value="163 antibodies from 25 providers"/>
</dbReference>
<dbReference type="DNASU" id="20454"/>
<dbReference type="Ensembl" id="ENSMUST00000069994.11">
    <molecule id="O88829-1"/>
    <property type="protein sequence ID" value="ENSMUSP00000070414.5"/>
    <property type="gene ID" value="ENSMUSG00000056091.13"/>
</dbReference>
<dbReference type="GeneID" id="20454"/>
<dbReference type="KEGG" id="mmu:20454"/>
<dbReference type="UCSC" id="uc009chy.2">
    <molecule id="O88829-1"/>
    <property type="organism name" value="mouse"/>
</dbReference>
<dbReference type="AGR" id="MGI:1339963"/>
<dbReference type="CTD" id="8869"/>
<dbReference type="MGI" id="MGI:1339963">
    <property type="gene designation" value="St3gal5"/>
</dbReference>
<dbReference type="VEuPathDB" id="HostDB:ENSMUSG00000056091"/>
<dbReference type="eggNOG" id="KOG2692">
    <property type="taxonomic scope" value="Eukaryota"/>
</dbReference>
<dbReference type="GeneTree" id="ENSGT00940000157929"/>
<dbReference type="InParanoid" id="O88829"/>
<dbReference type="OrthoDB" id="10264956at2759"/>
<dbReference type="PhylomeDB" id="O88829"/>
<dbReference type="TreeFam" id="TF352819"/>
<dbReference type="BRENDA" id="2.4.99.9">
    <property type="organism ID" value="3474"/>
</dbReference>
<dbReference type="Reactome" id="R-MMU-4085001">
    <property type="pathway name" value="Sialic acid metabolism"/>
</dbReference>
<dbReference type="Reactome" id="R-MMU-9840309">
    <property type="pathway name" value="Glycosphingolipid biosynthesis"/>
</dbReference>
<dbReference type="BioGRID-ORCS" id="20454">
    <property type="hits" value="5 hits in 80 CRISPR screens"/>
</dbReference>
<dbReference type="ChiTaRS" id="St3gal5">
    <property type="organism name" value="mouse"/>
</dbReference>
<dbReference type="PRO" id="PR:O88829"/>
<dbReference type="Proteomes" id="UP000000589">
    <property type="component" value="Chromosome 6"/>
</dbReference>
<dbReference type="RNAct" id="O88829">
    <property type="molecule type" value="protein"/>
</dbReference>
<dbReference type="Bgee" id="ENSMUSG00000056091">
    <property type="expression patterns" value="Expressed in granulocyte and 249 other cell types or tissues"/>
</dbReference>
<dbReference type="ExpressionAtlas" id="O88829">
    <property type="expression patterns" value="baseline and differential"/>
</dbReference>
<dbReference type="GO" id="GO:0000139">
    <property type="term" value="C:Golgi membrane"/>
    <property type="evidence" value="ECO:0007669"/>
    <property type="project" value="UniProtKB-SubCell"/>
</dbReference>
<dbReference type="GO" id="GO:0047291">
    <property type="term" value="F:lactosylceramide alpha-2,3-sialyltransferase activity"/>
    <property type="evidence" value="ECO:0000250"/>
    <property type="project" value="UniProtKB"/>
</dbReference>
<dbReference type="GO" id="GO:0006629">
    <property type="term" value="P:lipid metabolic process"/>
    <property type="evidence" value="ECO:0007669"/>
    <property type="project" value="UniProtKB-KW"/>
</dbReference>
<dbReference type="GO" id="GO:0006486">
    <property type="term" value="P:protein glycosylation"/>
    <property type="evidence" value="ECO:0007669"/>
    <property type="project" value="InterPro"/>
</dbReference>
<dbReference type="CDD" id="cd23983">
    <property type="entry name" value="GT29_ST3GAL5"/>
    <property type="match status" value="1"/>
</dbReference>
<dbReference type="FunFam" id="3.90.1480.20:FF:000006">
    <property type="entry name" value="ST3 beta-galactoside alpha-2,3-sialyltransferase 5"/>
    <property type="match status" value="1"/>
</dbReference>
<dbReference type="Gene3D" id="3.90.1480.20">
    <property type="entry name" value="Glycosyl transferase family 29"/>
    <property type="match status" value="1"/>
</dbReference>
<dbReference type="InterPro" id="IPR001675">
    <property type="entry name" value="Glyco_trans_29"/>
</dbReference>
<dbReference type="InterPro" id="IPR051142">
    <property type="entry name" value="Glycosyltransferase_29"/>
</dbReference>
<dbReference type="InterPro" id="IPR038578">
    <property type="entry name" value="GT29-like_sf"/>
</dbReference>
<dbReference type="PANTHER" id="PTHR13713:SF60">
    <property type="entry name" value="LACTOSYLCERAMIDE ALPHA-2,3-SIALYLTRANSFERASE"/>
    <property type="match status" value="1"/>
</dbReference>
<dbReference type="PANTHER" id="PTHR13713">
    <property type="entry name" value="SIALYLTRANSFERASE"/>
    <property type="match status" value="1"/>
</dbReference>
<dbReference type="Pfam" id="PF00777">
    <property type="entry name" value="Glyco_transf_29"/>
    <property type="match status" value="1"/>
</dbReference>
<accession>O88829</accession>
<accession>B2RRS1</accession>
<accession>Q3TMT6</accession>
<accession>Q3TY01</accession>
<accession>Q91YF2</accession>
<accession>Q91YF3</accession>
<accession>Q9CZ65</accession>
<accession>Q9QWF8</accession>
<accession>Q9QWF9</accession>
<evidence type="ECO:0000250" key="1"/>
<evidence type="ECO:0000250" key="2">
    <source>
        <dbReference type="UniProtKB" id="Q9UNP4"/>
    </source>
</evidence>
<evidence type="ECO:0000255" key="3"/>
<evidence type="ECO:0000269" key="4">
    <source>
    </source>
</evidence>
<evidence type="ECO:0000269" key="5">
    <source>
    </source>
</evidence>
<evidence type="ECO:0000269" key="6">
    <source>
    </source>
</evidence>
<evidence type="ECO:0000269" key="7">
    <source>
    </source>
</evidence>
<evidence type="ECO:0000303" key="8">
    <source>
    </source>
</evidence>
<evidence type="ECO:0000305" key="9"/>
<evidence type="ECO:0000305" key="10">
    <source>
    </source>
</evidence>
<evidence type="ECO:0000305" key="11">
    <source>
    </source>
</evidence>
<evidence type="ECO:0000305" key="12">
    <source>
    </source>
</evidence>
<evidence type="ECO:0000305" key="13">
    <source>
    </source>
</evidence>
<reference key="1">
    <citation type="journal article" date="1998" name="Biochem. Biophys. Res. Commun.">
        <title>Molecular cloning and characterization of fifth type of beta-galactoside alpha-2,3-sialyltransferase (ST3Gal V; GM3 synthase).</title>
        <authorList>
            <person name="Kono M."/>
            <person name="Takashima S."/>
            <person name="Liu H."/>
            <person name="Inoue M."/>
            <person name="Kojima N."/>
            <person name="Young-Choon L."/>
            <person name="Hamamoto T."/>
            <person name="Tsuji S."/>
        </authorList>
    </citation>
    <scope>NUCLEOTIDE SEQUENCE [MRNA] (ISOFORM 2)</scope>
    <scope>FUNCTION</scope>
    <scope>CATALYTIC ACTIVITY</scope>
    <scope>TISSUE SPECIFICITY</scope>
    <source>
        <strain>ICR</strain>
        <tissue>Brain</tissue>
    </source>
</reference>
<reference key="2">
    <citation type="submission" date="1998-09" db="EMBL/GenBank/DDBJ databases">
        <title>Mouse GM3 Synthase cDNA.</title>
        <authorList>
            <person name="Ishii A."/>
            <person name="Saito M."/>
        </authorList>
    </citation>
    <scope>NUCLEOTIDE SEQUENCE [MRNA] (ISOFORM 1)</scope>
    <source>
        <strain>C57BL/6J</strain>
        <tissue>Brain</tissue>
    </source>
</reference>
<reference key="3">
    <citation type="submission" date="1999-01" db="EMBL/GenBank/DDBJ databases">
        <title>Combinatorial PCR in homologous cloning: cloning of GM3 synthase (ST-I).</title>
        <authorList>
            <person name="Kapitonov D."/>
            <person name="Yu R.K."/>
        </authorList>
    </citation>
    <scope>NUCLEOTIDE SEQUENCE [MRNA] (ISOFORM 1)</scope>
    <source>
        <strain>C57BL/6J</strain>
    </source>
</reference>
<reference key="4">
    <citation type="journal article" date="2005" name="Science">
        <title>The transcriptional landscape of the mammalian genome.</title>
        <authorList>
            <person name="Carninci P."/>
            <person name="Kasukawa T."/>
            <person name="Katayama S."/>
            <person name="Gough J."/>
            <person name="Frith M.C."/>
            <person name="Maeda N."/>
            <person name="Oyama R."/>
            <person name="Ravasi T."/>
            <person name="Lenhard B."/>
            <person name="Wells C."/>
            <person name="Kodzius R."/>
            <person name="Shimokawa K."/>
            <person name="Bajic V.B."/>
            <person name="Brenner S.E."/>
            <person name="Batalov S."/>
            <person name="Forrest A.R."/>
            <person name="Zavolan M."/>
            <person name="Davis M.J."/>
            <person name="Wilming L.G."/>
            <person name="Aidinis V."/>
            <person name="Allen J.E."/>
            <person name="Ambesi-Impiombato A."/>
            <person name="Apweiler R."/>
            <person name="Aturaliya R.N."/>
            <person name="Bailey T.L."/>
            <person name="Bansal M."/>
            <person name="Baxter L."/>
            <person name="Beisel K.W."/>
            <person name="Bersano T."/>
            <person name="Bono H."/>
            <person name="Chalk A.M."/>
            <person name="Chiu K.P."/>
            <person name="Choudhary V."/>
            <person name="Christoffels A."/>
            <person name="Clutterbuck D.R."/>
            <person name="Crowe M.L."/>
            <person name="Dalla E."/>
            <person name="Dalrymple B.P."/>
            <person name="de Bono B."/>
            <person name="Della Gatta G."/>
            <person name="di Bernardo D."/>
            <person name="Down T."/>
            <person name="Engstrom P."/>
            <person name="Fagiolini M."/>
            <person name="Faulkner G."/>
            <person name="Fletcher C.F."/>
            <person name="Fukushima T."/>
            <person name="Furuno M."/>
            <person name="Futaki S."/>
            <person name="Gariboldi M."/>
            <person name="Georgii-Hemming P."/>
            <person name="Gingeras T.R."/>
            <person name="Gojobori T."/>
            <person name="Green R.E."/>
            <person name="Gustincich S."/>
            <person name="Harbers M."/>
            <person name="Hayashi Y."/>
            <person name="Hensch T.K."/>
            <person name="Hirokawa N."/>
            <person name="Hill D."/>
            <person name="Huminiecki L."/>
            <person name="Iacono M."/>
            <person name="Ikeo K."/>
            <person name="Iwama A."/>
            <person name="Ishikawa T."/>
            <person name="Jakt M."/>
            <person name="Kanapin A."/>
            <person name="Katoh M."/>
            <person name="Kawasawa Y."/>
            <person name="Kelso J."/>
            <person name="Kitamura H."/>
            <person name="Kitano H."/>
            <person name="Kollias G."/>
            <person name="Krishnan S.P."/>
            <person name="Kruger A."/>
            <person name="Kummerfeld S.K."/>
            <person name="Kurochkin I.V."/>
            <person name="Lareau L.F."/>
            <person name="Lazarevic D."/>
            <person name="Lipovich L."/>
            <person name="Liu J."/>
            <person name="Liuni S."/>
            <person name="McWilliam S."/>
            <person name="Madan Babu M."/>
            <person name="Madera M."/>
            <person name="Marchionni L."/>
            <person name="Matsuda H."/>
            <person name="Matsuzawa S."/>
            <person name="Miki H."/>
            <person name="Mignone F."/>
            <person name="Miyake S."/>
            <person name="Morris K."/>
            <person name="Mottagui-Tabar S."/>
            <person name="Mulder N."/>
            <person name="Nakano N."/>
            <person name="Nakauchi H."/>
            <person name="Ng P."/>
            <person name="Nilsson R."/>
            <person name="Nishiguchi S."/>
            <person name="Nishikawa S."/>
            <person name="Nori F."/>
            <person name="Ohara O."/>
            <person name="Okazaki Y."/>
            <person name="Orlando V."/>
            <person name="Pang K.C."/>
            <person name="Pavan W.J."/>
            <person name="Pavesi G."/>
            <person name="Pesole G."/>
            <person name="Petrovsky N."/>
            <person name="Piazza S."/>
            <person name="Reed J."/>
            <person name="Reid J.F."/>
            <person name="Ring B.Z."/>
            <person name="Ringwald M."/>
            <person name="Rost B."/>
            <person name="Ruan Y."/>
            <person name="Salzberg S.L."/>
            <person name="Sandelin A."/>
            <person name="Schneider C."/>
            <person name="Schoenbach C."/>
            <person name="Sekiguchi K."/>
            <person name="Semple C.A."/>
            <person name="Seno S."/>
            <person name="Sessa L."/>
            <person name="Sheng Y."/>
            <person name="Shibata Y."/>
            <person name="Shimada H."/>
            <person name="Shimada K."/>
            <person name="Silva D."/>
            <person name="Sinclair B."/>
            <person name="Sperling S."/>
            <person name="Stupka E."/>
            <person name="Sugiura K."/>
            <person name="Sultana R."/>
            <person name="Takenaka Y."/>
            <person name="Taki K."/>
            <person name="Tammoja K."/>
            <person name="Tan S.L."/>
            <person name="Tang S."/>
            <person name="Taylor M.S."/>
            <person name="Tegner J."/>
            <person name="Teichmann S.A."/>
            <person name="Ueda H.R."/>
            <person name="van Nimwegen E."/>
            <person name="Verardo R."/>
            <person name="Wei C.L."/>
            <person name="Yagi K."/>
            <person name="Yamanishi H."/>
            <person name="Zabarovsky E."/>
            <person name="Zhu S."/>
            <person name="Zimmer A."/>
            <person name="Hide W."/>
            <person name="Bult C."/>
            <person name="Grimmond S.M."/>
            <person name="Teasdale R.D."/>
            <person name="Liu E.T."/>
            <person name="Brusic V."/>
            <person name="Quackenbush J."/>
            <person name="Wahlestedt C."/>
            <person name="Mattick J.S."/>
            <person name="Hume D.A."/>
            <person name="Kai C."/>
            <person name="Sasaki D."/>
            <person name="Tomaru Y."/>
            <person name="Fukuda S."/>
            <person name="Kanamori-Katayama M."/>
            <person name="Suzuki M."/>
            <person name="Aoki J."/>
            <person name="Arakawa T."/>
            <person name="Iida J."/>
            <person name="Imamura K."/>
            <person name="Itoh M."/>
            <person name="Kato T."/>
            <person name="Kawaji H."/>
            <person name="Kawagashira N."/>
            <person name="Kawashima T."/>
            <person name="Kojima M."/>
            <person name="Kondo S."/>
            <person name="Konno H."/>
            <person name="Nakano K."/>
            <person name="Ninomiya N."/>
            <person name="Nishio T."/>
            <person name="Okada M."/>
            <person name="Plessy C."/>
            <person name="Shibata K."/>
            <person name="Shiraki T."/>
            <person name="Suzuki S."/>
            <person name="Tagami M."/>
            <person name="Waki K."/>
            <person name="Watahiki A."/>
            <person name="Okamura-Oho Y."/>
            <person name="Suzuki H."/>
            <person name="Kawai J."/>
            <person name="Hayashizaki Y."/>
        </authorList>
    </citation>
    <scope>NUCLEOTIDE SEQUENCE [LARGE SCALE MRNA] (ISOFORM 1)</scope>
    <source>
        <strain>C57BL/6J</strain>
        <tissue>Visual cortex</tissue>
    </source>
</reference>
<reference key="5">
    <citation type="journal article" date="2004" name="Genome Res.">
        <title>The status, quality, and expansion of the NIH full-length cDNA project: the Mammalian Gene Collection (MGC).</title>
        <authorList>
            <consortium name="The MGC Project Team"/>
        </authorList>
    </citation>
    <scope>NUCLEOTIDE SEQUENCE [LARGE SCALE MRNA] (ISOFORM 1)</scope>
    <source>
        <tissue>Brain</tissue>
    </source>
</reference>
<reference key="6">
    <citation type="journal article" date="1999" name="J. Biol. Chem.">
        <title>Expression cloning of mouse cDNA of CMP-NeuAc: lactosylceramide alpha2,3-sialyltransferase, an enzyme that initiates the synthesis of gangliosides.</title>
        <authorList>
            <person name="Fukumoto S."/>
            <person name="Miyazaki H."/>
            <person name="Goto G."/>
            <person name="Urano T."/>
            <person name="Furukawa K."/>
            <person name="Furukawa K."/>
        </authorList>
    </citation>
    <scope>NUCLEOTIDE SEQUENCE [MRNA] OF 52-414</scope>
    <scope>FUNCTION</scope>
    <scope>CATALYTIC ACTIVITY</scope>
    <scope>TISSUE SPECIFICITY</scope>
    <source>
        <strain>BALB/cJ</strain>
    </source>
</reference>
<reference key="7">
    <citation type="submission" date="1998-09" db="EMBL/GenBank/DDBJ databases">
        <authorList>
            <person name="Shuichi T."/>
        </authorList>
    </citation>
    <scope>NUCLEOTIDE SEQUENCE [GENOMIC DNA] OF 106-414</scope>
    <source>
        <strain>ICR</strain>
        <tissue>Brain</tissue>
    </source>
</reference>
<reference key="8">
    <citation type="journal article" date="2003" name="Proc. Natl. Acad. Sci. U.S.A.">
        <title>Enhanced insulin sensitivity in mice lacking ganglioside GM3.</title>
        <authorList>
            <person name="Yamashita T."/>
            <person name="Hashiramoto A."/>
            <person name="Haluzik M."/>
            <person name="Mizukami H."/>
            <person name="Beck S."/>
            <person name="Norton A."/>
            <person name="Kono M."/>
            <person name="Tsuji S."/>
            <person name="Daniotti J.L."/>
            <person name="Werth N."/>
            <person name="Sandhoff R."/>
            <person name="Sandhoff K."/>
            <person name="Proia R.L."/>
        </authorList>
    </citation>
    <scope>FUNCTION</scope>
    <scope>CATALYTIC ACTIVITY</scope>
    <scope>DISRUPTION PHENOTYPE</scope>
</reference>
<reference key="9">
    <citation type="journal article" date="2005" name="J. Biol. Chem.">
        <title>Binding of Clostridium botulinum type C and D neurotoxins to ganglioside and phospholipid. Novel insights into the receptor for clostridial neurotoxins.</title>
        <authorList>
            <person name="Tsukamoto K."/>
            <person name="Kohda T."/>
            <person name="Mukamoto M."/>
            <person name="Takeuchi K."/>
            <person name="Ihara H."/>
            <person name="Saito M."/>
            <person name="Kozaki S."/>
        </authorList>
    </citation>
    <scope>FUNCTION (MICROBIAL INFECTION)</scope>
    <scope>DISRUPTION PHENOTYPE</scope>
    <source>
        <strain>C57BL/6J</strain>
    </source>
</reference>
<proteinExistence type="evidence at protein level"/>
<gene>
    <name type="primary">St3gal5</name>
    <name type="synonym">GM3S</name>
    <name type="synonym">Siat9</name>
</gene>
<name>SIAT9_MOUSE</name>
<organism>
    <name type="scientific">Mus musculus</name>
    <name type="common">Mouse</name>
    <dbReference type="NCBI Taxonomy" id="10090"/>
    <lineage>
        <taxon>Eukaryota</taxon>
        <taxon>Metazoa</taxon>
        <taxon>Chordata</taxon>
        <taxon>Craniata</taxon>
        <taxon>Vertebrata</taxon>
        <taxon>Euteleostomi</taxon>
        <taxon>Mammalia</taxon>
        <taxon>Eutheria</taxon>
        <taxon>Euarchontoglires</taxon>
        <taxon>Glires</taxon>
        <taxon>Rodentia</taxon>
        <taxon>Myomorpha</taxon>
        <taxon>Muroidea</taxon>
        <taxon>Muridae</taxon>
        <taxon>Murinae</taxon>
        <taxon>Mus</taxon>
        <taxon>Mus</taxon>
    </lineage>
</organism>
<keyword id="KW-0025">Alternative splicing</keyword>
<keyword id="KW-1015">Disulfide bond</keyword>
<keyword id="KW-0325">Glycoprotein</keyword>
<keyword id="KW-0328">Glycosyltransferase</keyword>
<keyword id="KW-0333">Golgi apparatus</keyword>
<keyword id="KW-0443">Lipid metabolism</keyword>
<keyword id="KW-0472">Membrane</keyword>
<keyword id="KW-1185">Reference proteome</keyword>
<keyword id="KW-0735">Signal-anchor</keyword>
<keyword id="KW-0808">Transferase</keyword>
<keyword id="KW-0812">Transmembrane</keyword>
<keyword id="KW-1133">Transmembrane helix</keyword>
<sequence>MHTEAVGGAARRPQKLRSQAAAPACRAMPSEFTSAKLRSDCSRTSLQWYTRTQHKMRRPSLLIKDICKCTLVAFGVWLLYILILNYTAEECDMKRMHYVDPDRIKRAQSYAQEVLQKECRPRYAKTAMALLFEDRYSINLEPFVQKVPTASEAELKYDPPFGFRKFSSKVQSLLDMLPEHDFPEHLRAKACKRCVVVGNGGILHGLELGHALNQFDVVIRLNSAPVEGYSEHVGNKTTIRMTYPEGAPLSDVEYYANDLFVTVLFKSVDFKWLQAMVKNESLPFWVRLFFWKQVAEKVPLQPKHFRILNPVIIKETAFDILQYSEPQSRFWGHDKNIPTIGVIAVVLATHLCDEVSLAGFGYDLSQPRTPLHYFDSQCMGAMHWQVMHNVTTETKFLLKLLKEGVVEDLSGGIH</sequence>
<feature type="chain" id="PRO_0000149303" description="Lactosylceramide alpha-2,3-sialyltransferase">
    <location>
        <begin position="1"/>
        <end position="414"/>
    </location>
</feature>
<feature type="topological domain" description="Cytoplasmic" evidence="3">
    <location>
        <begin position="1"/>
        <end position="65"/>
    </location>
</feature>
<feature type="transmembrane region" description="Helical; Signal-anchor for type II membrane protein" evidence="3">
    <location>
        <begin position="66"/>
        <end position="86"/>
    </location>
</feature>
<feature type="topological domain" description="Lumenal" evidence="3">
    <location>
        <begin position="87"/>
        <end position="414"/>
    </location>
</feature>
<feature type="glycosylation site" description="N-linked (GlcNAc...) asparagine" evidence="3">
    <location>
        <position position="235"/>
    </location>
</feature>
<feature type="glycosylation site" description="N-linked (GlcNAc...) asparagine" evidence="3">
    <location>
        <position position="279"/>
    </location>
</feature>
<feature type="glycosylation site" description="N-linked (GlcNAc...) asparagine" evidence="3">
    <location>
        <position position="389"/>
    </location>
</feature>
<feature type="disulfide bond" evidence="1">
    <location>
        <begin position="194"/>
        <end position="352"/>
    </location>
</feature>
<feature type="splice variant" id="VSP_033689" description="In isoform 2." evidence="8">
    <original>MHTEAVGGAARRPQKLRSQAAAPACR</original>
    <variation>MGAPGELRRCGRGAA</variation>
    <location>
        <begin position="1"/>
        <end position="26"/>
    </location>
</feature>
<feature type="sequence conflict" description="In Ref. 4; BAE34763." evidence="9" ref="4">
    <original>N</original>
    <variation>K</variation>
    <location>
        <position position="139"/>
    </location>
</feature>
<feature type="sequence conflict" description="In Ref. 1; CAA75235/CAA75236." evidence="9" ref="1">
    <original>P</original>
    <variation>S</variation>
    <location>
        <position position="183"/>
    </location>
</feature>
<feature type="sequence conflict" description="In Ref. 4; BAE34763." evidence="9" ref="4">
    <original>H</original>
    <variation>Y</variation>
    <location>
        <position position="232"/>
    </location>
</feature>